<organism>
    <name type="scientific">Bacillus subtilis (strain 168)</name>
    <dbReference type="NCBI Taxonomy" id="224308"/>
    <lineage>
        <taxon>Bacteria</taxon>
        <taxon>Bacillati</taxon>
        <taxon>Bacillota</taxon>
        <taxon>Bacilli</taxon>
        <taxon>Bacillales</taxon>
        <taxon>Bacillaceae</taxon>
        <taxon>Bacillus</taxon>
    </lineage>
</organism>
<proteinExistence type="evidence at protein level"/>
<feature type="chain" id="PRO_0000109568" description="HTH-type transcriptional regulator CymR">
    <location>
        <begin position="1"/>
        <end position="138"/>
    </location>
</feature>
<feature type="domain" description="HTH rrf2-type" evidence="1">
    <location>
        <begin position="2"/>
        <end position="125"/>
    </location>
</feature>
<feature type="DNA-binding region" description="H-T-H motif" evidence="1">
    <location>
        <begin position="28"/>
        <end position="51"/>
    </location>
</feature>
<feature type="helix" evidence="4">
    <location>
        <begin position="5"/>
        <end position="19"/>
    </location>
</feature>
<feature type="turn" evidence="4">
    <location>
        <begin position="20"/>
        <end position="22"/>
    </location>
</feature>
<feature type="helix" evidence="4">
    <location>
        <begin position="28"/>
        <end position="34"/>
    </location>
</feature>
<feature type="helix" evidence="4">
    <location>
        <begin position="39"/>
        <end position="51"/>
    </location>
</feature>
<feature type="strand" evidence="4">
    <location>
        <begin position="54"/>
        <end position="57"/>
    </location>
</feature>
<feature type="strand" evidence="4">
    <location>
        <begin position="65"/>
        <end position="69"/>
    </location>
</feature>
<feature type="helix" evidence="4">
    <location>
        <begin position="76"/>
        <end position="84"/>
    </location>
</feature>
<feature type="strand" evidence="4">
    <location>
        <begin position="90"/>
        <end position="92"/>
    </location>
</feature>
<feature type="helix" evidence="4">
    <location>
        <begin position="98"/>
        <end position="117"/>
    </location>
</feature>
<feature type="helix" evidence="4">
    <location>
        <begin position="120"/>
        <end position="124"/>
    </location>
</feature>
<keyword id="KW-0002">3D-structure</keyword>
<keyword id="KW-0238">DNA-binding</keyword>
<keyword id="KW-1185">Reference proteome</keyword>
<keyword id="KW-0678">Repressor</keyword>
<keyword id="KW-0804">Transcription</keyword>
<keyword id="KW-0805">Transcription regulation</keyword>
<evidence type="ECO:0000255" key="1">
    <source>
        <dbReference type="PROSITE-ProRule" id="PRU00540"/>
    </source>
</evidence>
<evidence type="ECO:0000269" key="2">
    <source>
    </source>
</evidence>
<evidence type="ECO:0000269" key="3">
    <source>
    </source>
</evidence>
<evidence type="ECO:0007829" key="4">
    <source>
        <dbReference type="PDB" id="2Y75"/>
    </source>
</evidence>
<comment type="function">
    <text evidence="2 3">Master repressor of cysteine metabolism in B.subtilis. Controls the expression of genes involved either in cysteine synthesis from sulfide (cysK), sulfonates (ssu), or methionine (mccAB) or in cystine uptake (tcyP). Activity of CymR is positively regulated by CysK in response to cysteine availability. When cysteine is present, the pool of O-acetylserine (OAS) is low, which leads to the formation of a CymR-CysK complex and transcriptional repression of the CymR regulon occurs. In the absence of cysteine, the OAS pool is high and the CymR-CysK complex is mostly dissociated, leading to a faster dissociation of CymR from its DNA targets and the lifting of CymR-dependent repression.</text>
</comment>
<comment type="subunit">
    <text evidence="3">Homodimer. Forms homotetramers at higher concentrations of protein. Forms CymR(2):CysK(2) or CymR(4):CysK(4) complexes in the absence of O-acetylserine.</text>
</comment>
<comment type="interaction">
    <interactant intactId="EBI-6964678">
        <id>O34527</id>
    </interactant>
    <interactant intactId="EBI-6964678">
        <id>O34527</id>
        <label>cymR</label>
    </interactant>
    <organismsDiffer>false</organismsDiffer>
    <experiments>2</experiments>
</comment>
<comment type="disruption phenotype">
    <text evidence="2">Grows slowly with cystine as sole sulfur source.</text>
</comment>
<name>CYMR_BACSU</name>
<dbReference type="EMBL" id="AL009126">
    <property type="protein sequence ID" value="CAB14694.2"/>
    <property type="molecule type" value="Genomic_DNA"/>
</dbReference>
<dbReference type="PIR" id="B69982">
    <property type="entry name" value="B69982"/>
</dbReference>
<dbReference type="RefSeq" id="NP_390630.2">
    <property type="nucleotide sequence ID" value="NC_000964.3"/>
</dbReference>
<dbReference type="RefSeq" id="WP_003225879.1">
    <property type="nucleotide sequence ID" value="NZ_OZ025638.1"/>
</dbReference>
<dbReference type="PDB" id="2Y75">
    <property type="method" value="X-ray"/>
    <property type="resolution" value="2.00 A"/>
    <property type="chains" value="A/B/C/D/E/F=1-128"/>
</dbReference>
<dbReference type="PDBsum" id="2Y75"/>
<dbReference type="SMR" id="O34527"/>
<dbReference type="FunCoup" id="O34527">
    <property type="interactions" value="314"/>
</dbReference>
<dbReference type="MINT" id="O34527"/>
<dbReference type="STRING" id="224308.BSU27520"/>
<dbReference type="PaxDb" id="224308-BSU27520"/>
<dbReference type="EnsemblBacteria" id="CAB14694">
    <property type="protein sequence ID" value="CAB14694"/>
    <property type="gene ID" value="BSU_27520"/>
</dbReference>
<dbReference type="GeneID" id="86872739"/>
<dbReference type="GeneID" id="936456"/>
<dbReference type="KEGG" id="bsu:BSU27520"/>
<dbReference type="PATRIC" id="fig|224308.179.peg.2990"/>
<dbReference type="eggNOG" id="COG1959">
    <property type="taxonomic scope" value="Bacteria"/>
</dbReference>
<dbReference type="InParanoid" id="O34527"/>
<dbReference type="OrthoDB" id="9808360at2"/>
<dbReference type="PhylomeDB" id="O34527"/>
<dbReference type="BioCyc" id="BSUB:BSU27520-MONOMER"/>
<dbReference type="EvolutionaryTrace" id="O34527"/>
<dbReference type="PRO" id="PR:O34527"/>
<dbReference type="Proteomes" id="UP000001570">
    <property type="component" value="Chromosome"/>
</dbReference>
<dbReference type="GO" id="GO:0005829">
    <property type="term" value="C:cytosol"/>
    <property type="evidence" value="ECO:0000318"/>
    <property type="project" value="GO_Central"/>
</dbReference>
<dbReference type="GO" id="GO:0032991">
    <property type="term" value="C:protein-containing complex"/>
    <property type="evidence" value="ECO:0000314"/>
    <property type="project" value="CAFA"/>
</dbReference>
<dbReference type="GO" id="GO:0032993">
    <property type="term" value="C:protein-DNA complex"/>
    <property type="evidence" value="ECO:0000314"/>
    <property type="project" value="CAFA"/>
</dbReference>
<dbReference type="GO" id="GO:0001046">
    <property type="term" value="F:core promoter sequence-specific DNA binding"/>
    <property type="evidence" value="ECO:0000314"/>
    <property type="project" value="GO_Central"/>
</dbReference>
<dbReference type="GO" id="GO:0003700">
    <property type="term" value="F:DNA-binding transcription factor activity"/>
    <property type="evidence" value="ECO:0000318"/>
    <property type="project" value="GO_Central"/>
</dbReference>
<dbReference type="GO" id="GO:0042802">
    <property type="term" value="F:identical protein binding"/>
    <property type="evidence" value="ECO:0000353"/>
    <property type="project" value="IntAct"/>
</dbReference>
<dbReference type="GO" id="GO:0042803">
    <property type="term" value="F:protein homodimerization activity"/>
    <property type="evidence" value="ECO:0000314"/>
    <property type="project" value="CAFA"/>
</dbReference>
<dbReference type="GO" id="GO:0051291">
    <property type="term" value="P:protein heterooligomerization"/>
    <property type="evidence" value="ECO:0000314"/>
    <property type="project" value="CAFA"/>
</dbReference>
<dbReference type="GO" id="GO:0006355">
    <property type="term" value="P:regulation of DNA-templated transcription"/>
    <property type="evidence" value="ECO:0000318"/>
    <property type="project" value="GO_Central"/>
</dbReference>
<dbReference type="FunFam" id="1.10.10.10:FF:000164">
    <property type="entry name" value="Transcriptional regulator, Rrf2 family"/>
    <property type="match status" value="1"/>
</dbReference>
<dbReference type="Gene3D" id="1.10.10.10">
    <property type="entry name" value="Winged helix-like DNA-binding domain superfamily/Winged helix DNA-binding domain"/>
    <property type="match status" value="1"/>
</dbReference>
<dbReference type="InterPro" id="IPR030489">
    <property type="entry name" value="TR_Rrf2-type_CS"/>
</dbReference>
<dbReference type="InterPro" id="IPR000944">
    <property type="entry name" value="Tscrpt_reg_Rrf2"/>
</dbReference>
<dbReference type="InterPro" id="IPR036388">
    <property type="entry name" value="WH-like_DNA-bd_sf"/>
</dbReference>
<dbReference type="InterPro" id="IPR036390">
    <property type="entry name" value="WH_DNA-bd_sf"/>
</dbReference>
<dbReference type="NCBIfam" id="NF047409">
    <property type="entry name" value="Cys_reg_CymR"/>
    <property type="match status" value="1"/>
</dbReference>
<dbReference type="NCBIfam" id="TIGR00738">
    <property type="entry name" value="rrf2_super"/>
    <property type="match status" value="1"/>
</dbReference>
<dbReference type="PANTHER" id="PTHR33221:SF5">
    <property type="entry name" value="HTH-TYPE TRANSCRIPTIONAL REGULATOR ISCR"/>
    <property type="match status" value="1"/>
</dbReference>
<dbReference type="PANTHER" id="PTHR33221">
    <property type="entry name" value="WINGED HELIX-TURN-HELIX TRANSCRIPTIONAL REGULATOR, RRF2 FAMILY"/>
    <property type="match status" value="1"/>
</dbReference>
<dbReference type="Pfam" id="PF02082">
    <property type="entry name" value="Rrf2"/>
    <property type="match status" value="1"/>
</dbReference>
<dbReference type="SUPFAM" id="SSF46785">
    <property type="entry name" value="Winged helix' DNA-binding domain"/>
    <property type="match status" value="1"/>
</dbReference>
<dbReference type="PROSITE" id="PS01332">
    <property type="entry name" value="HTH_RRF2_1"/>
    <property type="match status" value="1"/>
</dbReference>
<dbReference type="PROSITE" id="PS51197">
    <property type="entry name" value="HTH_RRF2_2"/>
    <property type="match status" value="1"/>
</dbReference>
<accession>O34527</accession>
<protein>
    <recommendedName>
        <fullName>HTH-type transcriptional regulator CymR</fullName>
    </recommendedName>
    <alternativeName>
        <fullName>Cysteine metabolism repressor</fullName>
    </alternativeName>
</protein>
<sequence>MKISTKGRYGLTIMIELAKKHGEGPTSLKSIAQTNNLSEHYLEQLVSPLRNAGLVKSIRGAYGGYVLGSEPDAITAGDIIRVLEGPISPVEVLEDEEPAKRELWIRIRDAVKEVLDSTTLEDLASYTDGEQEAYMFYI</sequence>
<gene>
    <name type="primary">cymR</name>
    <name type="synonym">yrzC</name>
    <name type="ordered locus">BSU27520</name>
</gene>
<reference key="1">
    <citation type="journal article" date="1997" name="Nature">
        <title>The complete genome sequence of the Gram-positive bacterium Bacillus subtilis.</title>
        <authorList>
            <person name="Kunst F."/>
            <person name="Ogasawara N."/>
            <person name="Moszer I."/>
            <person name="Albertini A.M."/>
            <person name="Alloni G."/>
            <person name="Azevedo V."/>
            <person name="Bertero M.G."/>
            <person name="Bessieres P."/>
            <person name="Bolotin A."/>
            <person name="Borchert S."/>
            <person name="Borriss R."/>
            <person name="Boursier L."/>
            <person name="Brans A."/>
            <person name="Braun M."/>
            <person name="Brignell S.C."/>
            <person name="Bron S."/>
            <person name="Brouillet S."/>
            <person name="Bruschi C.V."/>
            <person name="Caldwell B."/>
            <person name="Capuano V."/>
            <person name="Carter N.M."/>
            <person name="Choi S.-K."/>
            <person name="Codani J.-J."/>
            <person name="Connerton I.F."/>
            <person name="Cummings N.J."/>
            <person name="Daniel R.A."/>
            <person name="Denizot F."/>
            <person name="Devine K.M."/>
            <person name="Duesterhoeft A."/>
            <person name="Ehrlich S.D."/>
            <person name="Emmerson P.T."/>
            <person name="Entian K.-D."/>
            <person name="Errington J."/>
            <person name="Fabret C."/>
            <person name="Ferrari E."/>
            <person name="Foulger D."/>
            <person name="Fritz C."/>
            <person name="Fujita M."/>
            <person name="Fujita Y."/>
            <person name="Fuma S."/>
            <person name="Galizzi A."/>
            <person name="Galleron N."/>
            <person name="Ghim S.-Y."/>
            <person name="Glaser P."/>
            <person name="Goffeau A."/>
            <person name="Golightly E.J."/>
            <person name="Grandi G."/>
            <person name="Guiseppi G."/>
            <person name="Guy B.J."/>
            <person name="Haga K."/>
            <person name="Haiech J."/>
            <person name="Harwood C.R."/>
            <person name="Henaut A."/>
            <person name="Hilbert H."/>
            <person name="Holsappel S."/>
            <person name="Hosono S."/>
            <person name="Hullo M.-F."/>
            <person name="Itaya M."/>
            <person name="Jones L.-M."/>
            <person name="Joris B."/>
            <person name="Karamata D."/>
            <person name="Kasahara Y."/>
            <person name="Klaerr-Blanchard M."/>
            <person name="Klein C."/>
            <person name="Kobayashi Y."/>
            <person name="Koetter P."/>
            <person name="Koningstein G."/>
            <person name="Krogh S."/>
            <person name="Kumano M."/>
            <person name="Kurita K."/>
            <person name="Lapidus A."/>
            <person name="Lardinois S."/>
            <person name="Lauber J."/>
            <person name="Lazarevic V."/>
            <person name="Lee S.-M."/>
            <person name="Levine A."/>
            <person name="Liu H."/>
            <person name="Masuda S."/>
            <person name="Mauel C."/>
            <person name="Medigue C."/>
            <person name="Medina N."/>
            <person name="Mellado R.P."/>
            <person name="Mizuno M."/>
            <person name="Moestl D."/>
            <person name="Nakai S."/>
            <person name="Noback M."/>
            <person name="Noone D."/>
            <person name="O'Reilly M."/>
            <person name="Ogawa K."/>
            <person name="Ogiwara A."/>
            <person name="Oudega B."/>
            <person name="Park S.-H."/>
            <person name="Parro V."/>
            <person name="Pohl T.M."/>
            <person name="Portetelle D."/>
            <person name="Porwollik S."/>
            <person name="Prescott A.M."/>
            <person name="Presecan E."/>
            <person name="Pujic P."/>
            <person name="Purnelle B."/>
            <person name="Rapoport G."/>
            <person name="Rey M."/>
            <person name="Reynolds S."/>
            <person name="Rieger M."/>
            <person name="Rivolta C."/>
            <person name="Rocha E."/>
            <person name="Roche B."/>
            <person name="Rose M."/>
            <person name="Sadaie Y."/>
            <person name="Sato T."/>
            <person name="Scanlan E."/>
            <person name="Schleich S."/>
            <person name="Schroeter R."/>
            <person name="Scoffone F."/>
            <person name="Sekiguchi J."/>
            <person name="Sekowska A."/>
            <person name="Seror S.J."/>
            <person name="Serror P."/>
            <person name="Shin B.-S."/>
            <person name="Soldo B."/>
            <person name="Sorokin A."/>
            <person name="Tacconi E."/>
            <person name="Takagi T."/>
            <person name="Takahashi H."/>
            <person name="Takemaru K."/>
            <person name="Takeuchi M."/>
            <person name="Tamakoshi A."/>
            <person name="Tanaka T."/>
            <person name="Terpstra P."/>
            <person name="Tognoni A."/>
            <person name="Tosato V."/>
            <person name="Uchiyama S."/>
            <person name="Vandenbol M."/>
            <person name="Vannier F."/>
            <person name="Vassarotti A."/>
            <person name="Viari A."/>
            <person name="Wambutt R."/>
            <person name="Wedler E."/>
            <person name="Wedler H."/>
            <person name="Weitzenegger T."/>
            <person name="Winters P."/>
            <person name="Wipat A."/>
            <person name="Yamamoto H."/>
            <person name="Yamane K."/>
            <person name="Yasumoto K."/>
            <person name="Yata K."/>
            <person name="Yoshida K."/>
            <person name="Yoshikawa H.-F."/>
            <person name="Zumstein E."/>
            <person name="Yoshikawa H."/>
            <person name="Danchin A."/>
        </authorList>
    </citation>
    <scope>NUCLEOTIDE SEQUENCE [LARGE SCALE GENOMIC DNA]</scope>
    <source>
        <strain>168</strain>
    </source>
</reference>
<reference key="2">
    <citation type="journal article" date="2009" name="Microbiology">
        <title>From a consortium sequence to a unified sequence: the Bacillus subtilis 168 reference genome a decade later.</title>
        <authorList>
            <person name="Barbe V."/>
            <person name="Cruveiller S."/>
            <person name="Kunst F."/>
            <person name="Lenoble P."/>
            <person name="Meurice G."/>
            <person name="Sekowska A."/>
            <person name="Vallenet D."/>
            <person name="Wang T."/>
            <person name="Moszer I."/>
            <person name="Medigue C."/>
            <person name="Danchin A."/>
        </authorList>
    </citation>
    <scope>SEQUENCE REVISION TO C-TERMINUS</scope>
</reference>
<reference key="3">
    <citation type="journal article" date="2006" name="J. Bacteriol.">
        <title>Global control of cysteine metabolism by CymR in Bacillus subtilis.</title>
        <authorList>
            <person name="Even S."/>
            <person name="Burguiere P."/>
            <person name="Auger S."/>
            <person name="Soutourina O."/>
            <person name="Danchin A."/>
            <person name="Martin-Verstraete I."/>
        </authorList>
    </citation>
    <scope>FUNCTION AS A CYSTEINE METABOLISM REPRESSOR</scope>
    <scope>REGULATION</scope>
    <scope>DISRUPTION PHENOTYPE</scope>
    <source>
        <strain>168</strain>
    </source>
</reference>
<reference key="4">
    <citation type="journal article" date="2008" name="J. Biol. Chem.">
        <title>The CymR regulator in complex with the enzyme CysK controls cysteine metabolism in Bacillus subtilis.</title>
        <authorList>
            <person name="Tanous C."/>
            <person name="Soutourina O."/>
            <person name="Raynal B."/>
            <person name="Hullo M.-F."/>
            <person name="Mervelet P."/>
            <person name="Gilles A.-M."/>
            <person name="Noirot P."/>
            <person name="Danchin A."/>
            <person name="England P."/>
            <person name="Martin-Verstraete I."/>
        </authorList>
    </citation>
    <scope>FUNCTION</scope>
    <scope>REGULATION</scope>
    <scope>SUBUNIT</scope>
    <scope>INTERACTION WITH CYSK</scope>
    <source>
        <strain>168</strain>
    </source>
</reference>